<proteinExistence type="inferred from homology"/>
<gene>
    <name type="primary">purB</name>
    <name type="ordered locus">DR_2178</name>
</gene>
<evidence type="ECO:0000250" key="1"/>
<evidence type="ECO:0000250" key="2">
    <source>
        <dbReference type="UniProtKB" id="P0AB89"/>
    </source>
</evidence>
<evidence type="ECO:0000305" key="3"/>
<reference key="1">
    <citation type="journal article" date="1999" name="Science">
        <title>Genome sequence of the radioresistant bacterium Deinococcus radiodurans R1.</title>
        <authorList>
            <person name="White O."/>
            <person name="Eisen J.A."/>
            <person name="Heidelberg J.F."/>
            <person name="Hickey E.K."/>
            <person name="Peterson J.D."/>
            <person name="Dodson R.J."/>
            <person name="Haft D.H."/>
            <person name="Gwinn M.L."/>
            <person name="Nelson W.C."/>
            <person name="Richardson D.L."/>
            <person name="Moffat K.S."/>
            <person name="Qin H."/>
            <person name="Jiang L."/>
            <person name="Pamphile W."/>
            <person name="Crosby M."/>
            <person name="Shen M."/>
            <person name="Vamathevan J.J."/>
            <person name="Lam P."/>
            <person name="McDonald L.A."/>
            <person name="Utterback T.R."/>
            <person name="Zalewski C."/>
            <person name="Makarova K.S."/>
            <person name="Aravind L."/>
            <person name="Daly M.J."/>
            <person name="Minton K.W."/>
            <person name="Fleischmann R.D."/>
            <person name="Ketchum K.A."/>
            <person name="Nelson K.E."/>
            <person name="Salzberg S.L."/>
            <person name="Smith H.O."/>
            <person name="Venter J.C."/>
            <person name="Fraser C.M."/>
        </authorList>
    </citation>
    <scope>NUCLEOTIDE SEQUENCE [LARGE SCALE GENOMIC DNA]</scope>
    <source>
        <strain>ATCC 13939 / DSM 20539 / JCM 16871 / CCUG 27074 / LMG 4051 / NBRC 15346 / NCIMB 9279 / VKM B-1422 / R1</strain>
    </source>
</reference>
<comment type="function">
    <text evidence="2">Catalyzes two reactions in de novo purine nucleotide biosynthesis. Catalyzes the breakdown of 5-aminoimidazole- (N-succinylocarboxamide) ribotide (SAICAR or 2-[5-amino-1-(5-phospho-beta-D-ribosyl)imidazole-4-carboxamido]succinate) to 5-aminoimidazole-4-carboxamide ribotide (AICAR or 5-amino-1-(5-phospho-beta-D-ribosyl)imidazole-4-carboxamide) and fumarate, and of adenylosuccinate (ADS or N(6)-(1,2-dicarboxyethyl)-AMP) to adenosine monophosphate (AMP) and fumarate.</text>
</comment>
<comment type="catalytic activity">
    <reaction evidence="2">
        <text>N(6)-(1,2-dicarboxyethyl)-AMP = fumarate + AMP</text>
        <dbReference type="Rhea" id="RHEA:16853"/>
        <dbReference type="ChEBI" id="CHEBI:29806"/>
        <dbReference type="ChEBI" id="CHEBI:57567"/>
        <dbReference type="ChEBI" id="CHEBI:456215"/>
        <dbReference type="EC" id="4.3.2.2"/>
    </reaction>
    <physiologicalReaction direction="left-to-right" evidence="2">
        <dbReference type="Rhea" id="RHEA:16854"/>
    </physiologicalReaction>
</comment>
<comment type="catalytic activity">
    <reaction evidence="2">
        <text>(2S)-2-[5-amino-1-(5-phospho-beta-D-ribosyl)imidazole-4-carboxamido]succinate = 5-amino-1-(5-phospho-beta-D-ribosyl)imidazole-4-carboxamide + fumarate</text>
        <dbReference type="Rhea" id="RHEA:23920"/>
        <dbReference type="ChEBI" id="CHEBI:29806"/>
        <dbReference type="ChEBI" id="CHEBI:58443"/>
        <dbReference type="ChEBI" id="CHEBI:58475"/>
        <dbReference type="EC" id="4.3.2.2"/>
    </reaction>
    <physiologicalReaction direction="left-to-right" evidence="2">
        <dbReference type="Rhea" id="RHEA:23921"/>
    </physiologicalReaction>
</comment>
<comment type="pathway">
    <text>Purine metabolism; AMP biosynthesis via de novo pathway; AMP from IMP: step 2/2.</text>
</comment>
<comment type="pathway">
    <text>Purine metabolism; IMP biosynthesis via de novo pathway; 5-amino-1-(5-phospho-D-ribosyl)imidazole-4-carboxamide from 5-amino-1-(5-phospho-D-ribosyl)imidazole-4-carboxylate: step 2/2.</text>
</comment>
<comment type="subunit">
    <text evidence="1">Homotetramer. Residues from neighboring subunits contribute catalytic and substrate-binding residues to each active site (By similarity).</text>
</comment>
<comment type="similarity">
    <text evidence="3">Belongs to the lyase 1 family. Adenylosuccinate lyase subfamily.</text>
</comment>
<keyword id="KW-0456">Lyase</keyword>
<keyword id="KW-0658">Purine biosynthesis</keyword>
<keyword id="KW-1185">Reference proteome</keyword>
<sequence length="435" mass="48540">MIDRYLTPEMKVLWSEANKYRAWLKVELSALQAQARHGEVPAEAHAALVQKSEADPLDDAFAQQVAEIEAVTRHDIVAFTRALTERYGEEARFIHHGLTSTDVVDTAQNLLLDEAMGLIITDVQTLREVCRMQAAAHKHTPVVGRTHGIHAEPMTFGLKFLNWMATLDRDLERLQAARGRVQVVMLSGSVGTYAHVSPKIEEEVAESWGWHAAPVTNQTLARDRHAEVLAALAILGTTLEKIAVEIRHLQRSEVREAMEPFGKGQTGSSSMPHKKNPILTENVTGFARLLRGFLATGLENVALWHERDISHSSAERVILPDATASASYATRRLTGVLRDLVVFPERMLKNLDDLGGLVFSQRVLHALIDDKGMMREAAYGIVQRNALKSWETGEGLRDLLKADPENPLSDAELDAAFDLQWYLRHVDDIYARFGM</sequence>
<feature type="chain" id="PRO_0000137877" description="Adenylosuccinate lyase">
    <location>
        <begin position="1"/>
        <end position="435"/>
    </location>
</feature>
<feature type="active site" description="Proton donor/acceptor" evidence="2">
    <location>
        <position position="147"/>
    </location>
</feature>
<feature type="active site" description="Proton donor/acceptor" evidence="2">
    <location>
        <position position="268"/>
    </location>
</feature>
<feature type="binding site" evidence="2">
    <location>
        <begin position="4"/>
        <end position="5"/>
    </location>
    <ligand>
        <name>N(6)-(1,2-dicarboxyethyl)-AMP</name>
        <dbReference type="ChEBI" id="CHEBI:57567"/>
    </ligand>
</feature>
<feature type="binding site" evidence="2">
    <location>
        <begin position="73"/>
        <end position="75"/>
    </location>
    <ligand>
        <name>N(6)-(1,2-dicarboxyethyl)-AMP</name>
        <dbReference type="ChEBI" id="CHEBI:57567"/>
    </ligand>
</feature>
<feature type="binding site" evidence="2">
    <location>
        <begin position="99"/>
        <end position="100"/>
    </location>
    <ligand>
        <name>N(6)-(1,2-dicarboxyethyl)-AMP</name>
        <dbReference type="ChEBI" id="CHEBI:57567"/>
    </ligand>
</feature>
<feature type="binding site" evidence="2">
    <location>
        <position position="218"/>
    </location>
    <ligand>
        <name>N(6)-(1,2-dicarboxyethyl)-AMP</name>
        <dbReference type="ChEBI" id="CHEBI:57567"/>
    </ligand>
</feature>
<feature type="binding site" evidence="2">
    <location>
        <position position="269"/>
    </location>
    <ligand>
        <name>N(6)-(1,2-dicarboxyethyl)-AMP</name>
        <dbReference type="ChEBI" id="CHEBI:57567"/>
    </ligand>
</feature>
<feature type="binding site" evidence="2">
    <location>
        <begin position="274"/>
        <end position="276"/>
    </location>
    <ligand>
        <name>N(6)-(1,2-dicarboxyethyl)-AMP</name>
        <dbReference type="ChEBI" id="CHEBI:57567"/>
    </ligand>
</feature>
<feature type="binding site" evidence="2">
    <location>
        <position position="282"/>
    </location>
    <ligand>
        <name>N(6)-(1,2-dicarboxyethyl)-AMP</name>
        <dbReference type="ChEBI" id="CHEBI:57567"/>
    </ligand>
</feature>
<feature type="binding site" evidence="2">
    <location>
        <begin position="313"/>
        <end position="317"/>
    </location>
    <ligand>
        <name>N(6)-(1,2-dicarboxyethyl)-AMP</name>
        <dbReference type="ChEBI" id="CHEBI:57567"/>
    </ligand>
</feature>
<dbReference type="EC" id="4.3.2.2" evidence="2"/>
<dbReference type="EMBL" id="AE000513">
    <property type="protein sequence ID" value="AAF11727.1"/>
    <property type="molecule type" value="Genomic_DNA"/>
</dbReference>
<dbReference type="PIR" id="A75305">
    <property type="entry name" value="A75305"/>
</dbReference>
<dbReference type="RefSeq" id="NP_295901.1">
    <property type="nucleotide sequence ID" value="NC_001263.1"/>
</dbReference>
<dbReference type="RefSeq" id="WP_010888809.1">
    <property type="nucleotide sequence ID" value="NC_001263.1"/>
</dbReference>
<dbReference type="SMR" id="Q9RSE6"/>
<dbReference type="FunCoup" id="Q9RSE6">
    <property type="interactions" value="494"/>
</dbReference>
<dbReference type="STRING" id="243230.DR_2178"/>
<dbReference type="PaxDb" id="243230-DR_2178"/>
<dbReference type="EnsemblBacteria" id="AAF11727">
    <property type="protein sequence ID" value="AAF11727"/>
    <property type="gene ID" value="DR_2178"/>
</dbReference>
<dbReference type="GeneID" id="69518421"/>
<dbReference type="KEGG" id="dra:DR_2178"/>
<dbReference type="PATRIC" id="fig|243230.17.peg.2403"/>
<dbReference type="eggNOG" id="COG0015">
    <property type="taxonomic scope" value="Bacteria"/>
</dbReference>
<dbReference type="HOGENOM" id="CLU_030949_0_1_0"/>
<dbReference type="InParanoid" id="Q9RSE6"/>
<dbReference type="OrthoDB" id="9768878at2"/>
<dbReference type="UniPathway" id="UPA00074">
    <property type="reaction ID" value="UER00132"/>
</dbReference>
<dbReference type="UniPathway" id="UPA00075">
    <property type="reaction ID" value="UER00336"/>
</dbReference>
<dbReference type="Proteomes" id="UP000002524">
    <property type="component" value="Chromosome 1"/>
</dbReference>
<dbReference type="GO" id="GO:0005829">
    <property type="term" value="C:cytosol"/>
    <property type="evidence" value="ECO:0000318"/>
    <property type="project" value="GO_Central"/>
</dbReference>
<dbReference type="GO" id="GO:0070626">
    <property type="term" value="F:(S)-2-(5-amino-1-(5-phospho-D-ribosyl)imidazole-4-carboxamido) succinate lyase (fumarate-forming) activity"/>
    <property type="evidence" value="ECO:0000318"/>
    <property type="project" value="GO_Central"/>
</dbReference>
<dbReference type="GO" id="GO:0004018">
    <property type="term" value="F:N6-(1,2-dicarboxyethyl)AMP AMP-lyase (fumarate-forming) activity"/>
    <property type="evidence" value="ECO:0000318"/>
    <property type="project" value="GO_Central"/>
</dbReference>
<dbReference type="GO" id="GO:0044208">
    <property type="term" value="P:'de novo' AMP biosynthetic process"/>
    <property type="evidence" value="ECO:0000318"/>
    <property type="project" value="GO_Central"/>
</dbReference>
<dbReference type="GO" id="GO:0006189">
    <property type="term" value="P:'de novo' IMP biosynthetic process"/>
    <property type="evidence" value="ECO:0007669"/>
    <property type="project" value="UniProtKB-UniPathway"/>
</dbReference>
<dbReference type="CDD" id="cd01360">
    <property type="entry name" value="Adenylsuccinate_lyase_1"/>
    <property type="match status" value="1"/>
</dbReference>
<dbReference type="FunFam" id="1.10.275.10:FF:000015">
    <property type="entry name" value="3-carboxy-cis,cis-muconate cycloisomerase"/>
    <property type="match status" value="1"/>
</dbReference>
<dbReference type="FunFam" id="1.10.40.30:FF:000022">
    <property type="entry name" value="Adenylosuccinate lyase"/>
    <property type="match status" value="1"/>
</dbReference>
<dbReference type="FunFam" id="1.20.200.10:FF:000008">
    <property type="entry name" value="Adenylosuccinate lyase"/>
    <property type="match status" value="1"/>
</dbReference>
<dbReference type="Gene3D" id="1.10.40.30">
    <property type="entry name" value="Fumarase/aspartase (C-terminal domain)"/>
    <property type="match status" value="1"/>
</dbReference>
<dbReference type="Gene3D" id="1.20.200.10">
    <property type="entry name" value="Fumarase/aspartase (Central domain)"/>
    <property type="match status" value="1"/>
</dbReference>
<dbReference type="Gene3D" id="1.10.275.10">
    <property type="entry name" value="Fumarase/aspartase (N-terminal domain)"/>
    <property type="match status" value="1"/>
</dbReference>
<dbReference type="InterPro" id="IPR019468">
    <property type="entry name" value="AdenyloSucc_lyase_C"/>
</dbReference>
<dbReference type="InterPro" id="IPR024083">
    <property type="entry name" value="Fumarase/histidase_N"/>
</dbReference>
<dbReference type="InterPro" id="IPR020557">
    <property type="entry name" value="Fumarate_lyase_CS"/>
</dbReference>
<dbReference type="InterPro" id="IPR000362">
    <property type="entry name" value="Fumarate_lyase_fam"/>
</dbReference>
<dbReference type="InterPro" id="IPR022761">
    <property type="entry name" value="Fumarate_lyase_N"/>
</dbReference>
<dbReference type="InterPro" id="IPR008948">
    <property type="entry name" value="L-Aspartase-like"/>
</dbReference>
<dbReference type="InterPro" id="IPR004769">
    <property type="entry name" value="Pur_lyase"/>
</dbReference>
<dbReference type="NCBIfam" id="TIGR00928">
    <property type="entry name" value="purB"/>
    <property type="match status" value="1"/>
</dbReference>
<dbReference type="PANTHER" id="PTHR43172">
    <property type="entry name" value="ADENYLOSUCCINATE LYASE"/>
    <property type="match status" value="1"/>
</dbReference>
<dbReference type="PANTHER" id="PTHR43172:SF1">
    <property type="entry name" value="ADENYLOSUCCINATE LYASE"/>
    <property type="match status" value="1"/>
</dbReference>
<dbReference type="Pfam" id="PF10397">
    <property type="entry name" value="ADSL_C"/>
    <property type="match status" value="1"/>
</dbReference>
<dbReference type="Pfam" id="PF00206">
    <property type="entry name" value="Lyase_1"/>
    <property type="match status" value="1"/>
</dbReference>
<dbReference type="PRINTS" id="PR00145">
    <property type="entry name" value="ARGSUCLYASE"/>
</dbReference>
<dbReference type="PRINTS" id="PR00149">
    <property type="entry name" value="FUMRATELYASE"/>
</dbReference>
<dbReference type="SMART" id="SM00998">
    <property type="entry name" value="ADSL_C"/>
    <property type="match status" value="1"/>
</dbReference>
<dbReference type="SUPFAM" id="SSF48557">
    <property type="entry name" value="L-aspartase-like"/>
    <property type="match status" value="1"/>
</dbReference>
<dbReference type="PROSITE" id="PS00163">
    <property type="entry name" value="FUMARATE_LYASES"/>
    <property type="match status" value="1"/>
</dbReference>
<organism>
    <name type="scientific">Deinococcus radiodurans (strain ATCC 13939 / DSM 20539 / JCM 16871 / CCUG 27074 / LMG 4051 / NBRC 15346 / NCIMB 9279 / VKM B-1422 / R1)</name>
    <dbReference type="NCBI Taxonomy" id="243230"/>
    <lineage>
        <taxon>Bacteria</taxon>
        <taxon>Thermotogati</taxon>
        <taxon>Deinococcota</taxon>
        <taxon>Deinococci</taxon>
        <taxon>Deinococcales</taxon>
        <taxon>Deinococcaceae</taxon>
        <taxon>Deinococcus</taxon>
    </lineage>
</organism>
<protein>
    <recommendedName>
        <fullName>Adenylosuccinate lyase</fullName>
        <shortName>ASL</shortName>
        <ecNumber evidence="2">4.3.2.2</ecNumber>
    </recommendedName>
    <alternativeName>
        <fullName>Adenylosuccinase</fullName>
        <shortName>ASase</shortName>
    </alternativeName>
</protein>
<name>PUR8_DEIRA</name>
<accession>Q9RSE6</accession>